<sequence>MVISAERTNVGFITQVIGPVVDIEFPSGKMPAIYNALRIQGKNAAGLDVAVTCEVQQLLGDNRVRAVAMSSTDGLVRGMEVVDTGAPISVPVGTATLGRIFNVLGEPVDEKGAVNATETLPIHRPAPSFTQLETKPSVFETGIKVIDLLTPYRRGGKIGLFGGAGVGKTVIMMELINNIATQHGGVSVFAGVGERTREGNDLYNEMIESGVIDKDDPSKSKIALVYGQMNEPPGARMRVGLSGLTMAEYFRDVNKQDVLLFIDNIFRFVQAGSEVSALLGRMPSAVGYQPTLGTDVGALQERITSTTEGSITSIQAVYVPADDLTDPAPATTFAHLDGTTVLSRSLAAKGIYPAVDPLGSTSNMLQPDIVGEEHYQTARAVQATLQRYKELQDIIAILGLDELSEEDRLTVARARKIERFLSQPFFVAEVFTGAPGKYVTLEETIKGFQMILSGELDDLPEQAFYMVGNIEEAKAKAEKLKA</sequence>
<dbReference type="EC" id="7.1.2.2" evidence="1"/>
<dbReference type="EMBL" id="BA000039">
    <property type="protein sequence ID" value="BAC08077.1"/>
    <property type="molecule type" value="Genomic_DNA"/>
</dbReference>
<dbReference type="RefSeq" id="NP_681315.1">
    <property type="nucleotide sequence ID" value="NC_004113.1"/>
</dbReference>
<dbReference type="RefSeq" id="WP_011056375.1">
    <property type="nucleotide sequence ID" value="NC_004113.1"/>
</dbReference>
<dbReference type="SMR" id="Q8DLG8"/>
<dbReference type="STRING" id="197221.gene:10747114"/>
<dbReference type="EnsemblBacteria" id="BAC08077">
    <property type="protein sequence ID" value="BAC08077"/>
    <property type="gene ID" value="BAC08077"/>
</dbReference>
<dbReference type="KEGG" id="tel:tlr0525"/>
<dbReference type="PATRIC" id="fig|197221.4.peg.553"/>
<dbReference type="eggNOG" id="COG0055">
    <property type="taxonomic scope" value="Bacteria"/>
</dbReference>
<dbReference type="Proteomes" id="UP000000440">
    <property type="component" value="Chromosome"/>
</dbReference>
<dbReference type="GO" id="GO:0031676">
    <property type="term" value="C:plasma membrane-derived thylakoid membrane"/>
    <property type="evidence" value="ECO:0007669"/>
    <property type="project" value="UniProtKB-SubCell"/>
</dbReference>
<dbReference type="GO" id="GO:0045259">
    <property type="term" value="C:proton-transporting ATP synthase complex"/>
    <property type="evidence" value="ECO:0007669"/>
    <property type="project" value="UniProtKB-KW"/>
</dbReference>
<dbReference type="GO" id="GO:0005524">
    <property type="term" value="F:ATP binding"/>
    <property type="evidence" value="ECO:0007669"/>
    <property type="project" value="UniProtKB-UniRule"/>
</dbReference>
<dbReference type="GO" id="GO:0016887">
    <property type="term" value="F:ATP hydrolysis activity"/>
    <property type="evidence" value="ECO:0007669"/>
    <property type="project" value="InterPro"/>
</dbReference>
<dbReference type="GO" id="GO:0046933">
    <property type="term" value="F:proton-transporting ATP synthase activity, rotational mechanism"/>
    <property type="evidence" value="ECO:0007669"/>
    <property type="project" value="UniProtKB-UniRule"/>
</dbReference>
<dbReference type="CDD" id="cd18110">
    <property type="entry name" value="ATP-synt_F1_beta_C"/>
    <property type="match status" value="1"/>
</dbReference>
<dbReference type="CDD" id="cd18115">
    <property type="entry name" value="ATP-synt_F1_beta_N"/>
    <property type="match status" value="1"/>
</dbReference>
<dbReference type="CDD" id="cd01133">
    <property type="entry name" value="F1-ATPase_beta_CD"/>
    <property type="match status" value="1"/>
</dbReference>
<dbReference type="FunFam" id="1.10.1140.10:FF:000001">
    <property type="entry name" value="ATP synthase subunit beta"/>
    <property type="match status" value="1"/>
</dbReference>
<dbReference type="FunFam" id="3.40.50.300:FF:000004">
    <property type="entry name" value="ATP synthase subunit beta"/>
    <property type="match status" value="1"/>
</dbReference>
<dbReference type="FunFam" id="2.40.10.170:FF:000002">
    <property type="entry name" value="ATP synthase subunit beta, chloroplastic"/>
    <property type="match status" value="1"/>
</dbReference>
<dbReference type="Gene3D" id="2.40.10.170">
    <property type="match status" value="1"/>
</dbReference>
<dbReference type="Gene3D" id="1.10.1140.10">
    <property type="entry name" value="Bovine Mitochondrial F1-atpase, Atp Synthase Beta Chain, Chain D, domain 3"/>
    <property type="match status" value="1"/>
</dbReference>
<dbReference type="Gene3D" id="3.40.50.300">
    <property type="entry name" value="P-loop containing nucleotide triphosphate hydrolases"/>
    <property type="match status" value="1"/>
</dbReference>
<dbReference type="HAMAP" id="MF_01347">
    <property type="entry name" value="ATP_synth_beta_bact"/>
    <property type="match status" value="1"/>
</dbReference>
<dbReference type="InterPro" id="IPR003593">
    <property type="entry name" value="AAA+_ATPase"/>
</dbReference>
<dbReference type="InterPro" id="IPR055190">
    <property type="entry name" value="ATP-synt_VA_C"/>
</dbReference>
<dbReference type="InterPro" id="IPR005722">
    <property type="entry name" value="ATP_synth_F1_bsu"/>
</dbReference>
<dbReference type="InterPro" id="IPR020003">
    <property type="entry name" value="ATPase_a/bsu_AS"/>
</dbReference>
<dbReference type="InterPro" id="IPR050053">
    <property type="entry name" value="ATPase_alpha/beta_chains"/>
</dbReference>
<dbReference type="InterPro" id="IPR004100">
    <property type="entry name" value="ATPase_F1/V1/A1_a/bsu_N"/>
</dbReference>
<dbReference type="InterPro" id="IPR036121">
    <property type="entry name" value="ATPase_F1/V1/A1_a/bsu_N_sf"/>
</dbReference>
<dbReference type="InterPro" id="IPR000194">
    <property type="entry name" value="ATPase_F1/V1/A1_a/bsu_nucl-bd"/>
</dbReference>
<dbReference type="InterPro" id="IPR024034">
    <property type="entry name" value="ATPase_F1/V1_b/a_C"/>
</dbReference>
<dbReference type="InterPro" id="IPR027417">
    <property type="entry name" value="P-loop_NTPase"/>
</dbReference>
<dbReference type="NCBIfam" id="TIGR01039">
    <property type="entry name" value="atpD"/>
    <property type="match status" value="1"/>
</dbReference>
<dbReference type="PANTHER" id="PTHR15184">
    <property type="entry name" value="ATP SYNTHASE"/>
    <property type="match status" value="1"/>
</dbReference>
<dbReference type="PANTHER" id="PTHR15184:SF71">
    <property type="entry name" value="ATP SYNTHASE SUBUNIT BETA, MITOCHONDRIAL"/>
    <property type="match status" value="1"/>
</dbReference>
<dbReference type="Pfam" id="PF00006">
    <property type="entry name" value="ATP-synt_ab"/>
    <property type="match status" value="1"/>
</dbReference>
<dbReference type="Pfam" id="PF02874">
    <property type="entry name" value="ATP-synt_ab_N"/>
    <property type="match status" value="1"/>
</dbReference>
<dbReference type="Pfam" id="PF22919">
    <property type="entry name" value="ATP-synt_VA_C"/>
    <property type="match status" value="1"/>
</dbReference>
<dbReference type="PIRSF" id="PIRSF039072">
    <property type="entry name" value="ATPase_subunit_beta"/>
    <property type="match status" value="1"/>
</dbReference>
<dbReference type="SMART" id="SM00382">
    <property type="entry name" value="AAA"/>
    <property type="match status" value="1"/>
</dbReference>
<dbReference type="SUPFAM" id="SSF47917">
    <property type="entry name" value="C-terminal domain of alpha and beta subunits of F1 ATP synthase"/>
    <property type="match status" value="1"/>
</dbReference>
<dbReference type="SUPFAM" id="SSF50615">
    <property type="entry name" value="N-terminal domain of alpha and beta subunits of F1 ATP synthase"/>
    <property type="match status" value="1"/>
</dbReference>
<dbReference type="SUPFAM" id="SSF52540">
    <property type="entry name" value="P-loop containing nucleoside triphosphate hydrolases"/>
    <property type="match status" value="1"/>
</dbReference>
<dbReference type="PROSITE" id="PS00152">
    <property type="entry name" value="ATPASE_ALPHA_BETA"/>
    <property type="match status" value="1"/>
</dbReference>
<protein>
    <recommendedName>
        <fullName evidence="1">ATP synthase subunit beta</fullName>
        <ecNumber evidence="1">7.1.2.2</ecNumber>
    </recommendedName>
    <alternativeName>
        <fullName evidence="1">ATP synthase F1 sector subunit beta</fullName>
    </alternativeName>
    <alternativeName>
        <fullName evidence="1">F-ATPase subunit beta</fullName>
    </alternativeName>
</protein>
<reference key="1">
    <citation type="journal article" date="2002" name="DNA Res.">
        <title>Complete genome structure of the thermophilic cyanobacterium Thermosynechococcus elongatus BP-1.</title>
        <authorList>
            <person name="Nakamura Y."/>
            <person name="Kaneko T."/>
            <person name="Sato S."/>
            <person name="Ikeuchi M."/>
            <person name="Katoh H."/>
            <person name="Sasamoto S."/>
            <person name="Watanabe A."/>
            <person name="Iriguchi M."/>
            <person name="Kawashima K."/>
            <person name="Kimura T."/>
            <person name="Kishida Y."/>
            <person name="Kiyokawa C."/>
            <person name="Kohara M."/>
            <person name="Matsumoto M."/>
            <person name="Matsuno A."/>
            <person name="Nakazaki N."/>
            <person name="Shimpo S."/>
            <person name="Sugimoto M."/>
            <person name="Takeuchi C."/>
            <person name="Yamada M."/>
            <person name="Tabata S."/>
        </authorList>
    </citation>
    <scope>NUCLEOTIDE SEQUENCE [LARGE SCALE GENOMIC DNA]</scope>
    <source>
        <strain>NIES-2133 / IAM M-273 / BP-1</strain>
    </source>
</reference>
<reference key="2">
    <citation type="journal article" date="2008" name="Biochim. Biophys. Acta">
        <title>Remarkable stability of the proton translocating F1FO-ATP synthase from the thermophilic cyanobacterium Thermosynechococcus elongatus BP-1.</title>
        <authorList>
            <person name="Suhai T."/>
            <person name="Dencher N.A."/>
            <person name="Poetsch A."/>
            <person name="Seelert H."/>
        </authorList>
    </citation>
    <scope>FUNCTION</scope>
    <scope>MASS SPECTROMETRY</scope>
    <scope>SUBUNIT</scope>
    <scope>SUBCELLULAR LOCATION</scope>
    <source>
        <strain>NIES-2133 / IAM M-273 / BP-1</strain>
    </source>
</reference>
<feature type="chain" id="PRO_0000254404" description="ATP synthase subunit beta">
    <location>
        <begin position="1"/>
        <end position="482"/>
    </location>
</feature>
<feature type="binding site" evidence="1">
    <location>
        <begin position="162"/>
        <end position="169"/>
    </location>
    <ligand>
        <name>ATP</name>
        <dbReference type="ChEBI" id="CHEBI:30616"/>
    </ligand>
</feature>
<name>ATPB_THEVB</name>
<proteinExistence type="evidence at protein level"/>
<organism>
    <name type="scientific">Thermosynechococcus vestitus (strain NIES-2133 / IAM M-273 / BP-1)</name>
    <dbReference type="NCBI Taxonomy" id="197221"/>
    <lineage>
        <taxon>Bacteria</taxon>
        <taxon>Bacillati</taxon>
        <taxon>Cyanobacteriota</taxon>
        <taxon>Cyanophyceae</taxon>
        <taxon>Acaryochloridales</taxon>
        <taxon>Thermosynechococcaceae</taxon>
        <taxon>Thermosynechococcus</taxon>
    </lineage>
</organism>
<evidence type="ECO:0000255" key="1">
    <source>
        <dbReference type="HAMAP-Rule" id="MF_01347"/>
    </source>
</evidence>
<evidence type="ECO:0000269" key="2">
    <source>
    </source>
</evidence>
<comment type="function">
    <text evidence="1">Produces ATP from ADP in the presence of a proton gradient across the membrane. The catalytic sites are hosted primarily by the beta subunits.</text>
</comment>
<comment type="function">
    <text evidence="2">The complex from the organism is particularly stable to disruption and remains functional after 6 hrs at 55 degrees Celsius.</text>
</comment>
<comment type="catalytic activity">
    <reaction evidence="1">
        <text>ATP + H2O + 4 H(+)(in) = ADP + phosphate + 5 H(+)(out)</text>
        <dbReference type="Rhea" id="RHEA:57720"/>
        <dbReference type="ChEBI" id="CHEBI:15377"/>
        <dbReference type="ChEBI" id="CHEBI:15378"/>
        <dbReference type="ChEBI" id="CHEBI:30616"/>
        <dbReference type="ChEBI" id="CHEBI:43474"/>
        <dbReference type="ChEBI" id="CHEBI:456216"/>
        <dbReference type="EC" id="7.1.2.2"/>
    </reaction>
</comment>
<comment type="activity regulation">
    <text>Inhibited by dicyclohexylcarbodiimide.</text>
</comment>
<comment type="biophysicochemical properties">
    <temperatureDependence>
        <text>Optimum temperature is 55 degrees Celsius, activity was detected from 4 to 95 degrees Celsius.</text>
    </temperatureDependence>
</comment>
<comment type="subunit">
    <text evidence="1 2">F-type ATPases have 2 components, CF(1) - the catalytic core - and CF(0) - the membrane proton channel. CF(1) has five subunits: alpha(3), beta(3), gamma(1), delta(1), epsilon(1). CF(0) has four main subunits: a(1), b(1), b'(1) and c(9-12).</text>
</comment>
<comment type="subcellular location">
    <subcellularLocation>
        <location evidence="1 2">Cellular thylakoid membrane</location>
        <topology evidence="1">Peripheral membrane protein</topology>
    </subcellularLocation>
</comment>
<comment type="mass spectrometry"/>
<comment type="similarity">
    <text evidence="1">Belongs to the ATPase alpha/beta chains family.</text>
</comment>
<accession>Q8DLG8</accession>
<keyword id="KW-0066">ATP synthesis</keyword>
<keyword id="KW-0067">ATP-binding</keyword>
<keyword id="KW-0139">CF(1)</keyword>
<keyword id="KW-0375">Hydrogen ion transport</keyword>
<keyword id="KW-0406">Ion transport</keyword>
<keyword id="KW-0472">Membrane</keyword>
<keyword id="KW-0547">Nucleotide-binding</keyword>
<keyword id="KW-1185">Reference proteome</keyword>
<keyword id="KW-0793">Thylakoid</keyword>
<keyword id="KW-1278">Translocase</keyword>
<keyword id="KW-0813">Transport</keyword>
<gene>
    <name evidence="1" type="primary">atpD</name>
    <name evidence="1" type="synonym">atpB</name>
    <name type="ordered locus">tlr0525</name>
</gene>